<accession>F1MX48</accession>
<proteinExistence type="inferred from homology"/>
<comment type="function">
    <text evidence="1">Factor involved in transcription-coupled nucleotide excision repair (TC-NER), a mechanism that rapidly removes RNA polymerase II-blocking lesions from the transcribed strand of active genes. Acts as a key adapter that promotes recruitment of factors involved in TC-NER. Facilitates the ubiquitination of the elongating form of RNA polymerase II (RNA pol IIo) at DNA damage sites, thereby promoting RNA pol IIo backtracking and access by the TC-NER machinery to lesion sites. Also promotes stabilization of ERCC6/CSB by recruiting deubiquitinating enzyme USP7 to TC-NER complexes, preventing UV-induced degradation of ERCC6 by the proteasome. Mediates the recruitment of the TFIIH complex and other factors that are required for nucleotide excision repair to RNA polymerase II. Also required to inactivate stalled RNA polymerase II by blocking the access of TCEA1/TFIIS, thereby preventing reactivation of RNA polymerase II. Not involved in processing oxidative damage.</text>
</comment>
<comment type="subunit">
    <text evidence="1">Interacts with the elongating form of RNA polymerase II (RNA pol IIo) during transcription stress. Interacts with the TFIIH complex during transcription stress. Interacts with ERCC6. Interacts with ERCC8. Interacts with USP7.</text>
</comment>
<comment type="subcellular location">
    <subcellularLocation>
        <location evidence="1">Chromosome</location>
    </subcellularLocation>
    <text evidence="1">Accumulates at UV DNA damage sites.</text>
</comment>
<comment type="PTM">
    <text evidence="1">Monoubiquitinated at Lys-383 in response to transcription stress; this promotes efficient transfer of TFIIH to stalled RNA polymerase II.</text>
</comment>
<comment type="similarity">
    <text evidence="5">Belongs to the UVSSA family.</text>
</comment>
<feature type="chain" id="PRO_0000417993" description="UV-stimulated scaffold protein A">
    <location>
        <begin position="1"/>
        <end position="685"/>
    </location>
</feature>
<feature type="zinc finger region" description="UVSSA-type" evidence="3">
    <location>
        <begin position="539"/>
        <end position="566"/>
    </location>
</feature>
<feature type="region of interest" description="VHS-like">
    <location>
        <begin position="2"/>
        <end position="145"/>
    </location>
</feature>
<feature type="region of interest" description="Disordered" evidence="4">
    <location>
        <begin position="243"/>
        <end position="267"/>
    </location>
</feature>
<feature type="region of interest" description="Disordered" evidence="4">
    <location>
        <begin position="353"/>
        <end position="466"/>
    </location>
</feature>
<feature type="region of interest" description="Disordered" evidence="4">
    <location>
        <begin position="563"/>
        <end position="636"/>
    </location>
</feature>
<feature type="coiled-coil region" evidence="2">
    <location>
        <begin position="153"/>
        <end position="198"/>
    </location>
</feature>
<feature type="compositionally biased region" description="Acidic residues" evidence="4">
    <location>
        <begin position="368"/>
        <end position="379"/>
    </location>
</feature>
<feature type="compositionally biased region" description="Basic and acidic residues" evidence="4">
    <location>
        <begin position="380"/>
        <end position="403"/>
    </location>
</feature>
<feature type="compositionally biased region" description="Pro residues" evidence="4">
    <location>
        <begin position="445"/>
        <end position="458"/>
    </location>
</feature>
<feature type="compositionally biased region" description="Basic and acidic residues" evidence="4">
    <location>
        <begin position="567"/>
        <end position="586"/>
    </location>
</feature>
<feature type="compositionally biased region" description="Basic residues" evidence="4">
    <location>
        <begin position="622"/>
        <end position="632"/>
    </location>
</feature>
<feature type="binding site" evidence="3">
    <location>
        <position position="542"/>
    </location>
    <ligand>
        <name>Zn(2+)</name>
        <dbReference type="ChEBI" id="CHEBI:29105"/>
    </ligand>
</feature>
<feature type="binding site" evidence="3">
    <location>
        <position position="552"/>
    </location>
    <ligand>
        <name>Zn(2+)</name>
        <dbReference type="ChEBI" id="CHEBI:29105"/>
    </ligand>
</feature>
<feature type="binding site" evidence="3">
    <location>
        <position position="560"/>
    </location>
    <ligand>
        <name>Zn(2+)</name>
        <dbReference type="ChEBI" id="CHEBI:29105"/>
    </ligand>
</feature>
<feature type="binding site" evidence="3">
    <location>
        <position position="563"/>
    </location>
    <ligand>
        <name>Zn(2+)</name>
        <dbReference type="ChEBI" id="CHEBI:29105"/>
    </ligand>
</feature>
<feature type="modified residue" description="Phosphoserine" evidence="1">
    <location>
        <position position="253"/>
    </location>
</feature>
<feature type="cross-link" description="Glycyl lysine isopeptide (Lys-Gly) (interchain with G-Cter in ubiquitin)" evidence="1">
    <location>
        <position position="383"/>
    </location>
</feature>
<sequence>MDQKLSELVEELTTSGEPQLNPEKMKQLKKICKSSEEQLGHAYHLLMAQLSQEHAEIRLSAFQVLDQLFARSHQFRTLVVSNFQEFLELTLGTDHERPLPPPREVAQRLRQAATQAIRGWNEKYGAAYKKLALGFHFLKHSKQVDFQDVDARTVAERKRAEERQKRLDRIYKERSEWAAREMEEMSTEIRGCLTELESCFRLLLPFDLDLAPGAAWCPVPEKGDRDEEQPCCSKSLAACAHHPGAMDAGGPPSEDEDRDPDGFVRRHGLGSRQYTLDVELSSDSLRVRENEDNSAVIRAARDALRLIQNKLLPAACSWVQLFTRAGTYGGHLEGAIHLKAELEAALKRSRELDIVPEEGRSGETAAPGDEDEDEDDFVEVPEKEGYEACVPEHLRPECGEQRHGPGRGLEEGLAAPGSQARKRPGSDMEAFDPTSAAAQQQWPRPHGPPASPPSPRAPLAPEQAAWRAAEQARAPVVPFGVDLCYWGQEELMAGKILKCDSEHRFWKPCEVDAEVESASVSEALRSRRITFAGQFEPVQHRCRAPRPDGQLCARQDRLKCPFHGKIIPRDDAGRPLNAEDRAREQRQQLQRPAGRPDWQDPEFLRDVEAATGVDLGSSRPGGKGKGKRRKHSGLTDLKRQADTARARIAKKVFAKAAVQRVVTAMNQMDEKKHEKFANQFNYALN</sequence>
<dbReference type="EMBL" id="DAAA02018546">
    <property type="status" value="NOT_ANNOTATED_CDS"/>
    <property type="molecule type" value="Genomic_DNA"/>
</dbReference>
<dbReference type="SMR" id="F1MX48"/>
<dbReference type="FunCoup" id="F1MX48">
    <property type="interactions" value="2464"/>
</dbReference>
<dbReference type="STRING" id="9913.ENSBTAP00000016697"/>
<dbReference type="PaxDb" id="9913-ENSBTAP00000016697"/>
<dbReference type="eggNOG" id="KOG2374">
    <property type="taxonomic scope" value="Eukaryota"/>
</dbReference>
<dbReference type="HOGENOM" id="CLU_023577_0_0_1"/>
<dbReference type="InParanoid" id="F1MX48"/>
<dbReference type="OrthoDB" id="5594015at2759"/>
<dbReference type="TreeFam" id="TF321660"/>
<dbReference type="Proteomes" id="UP000009136">
    <property type="component" value="Unplaced"/>
</dbReference>
<dbReference type="GO" id="GO:0005694">
    <property type="term" value="C:chromosome"/>
    <property type="evidence" value="ECO:0000250"/>
    <property type="project" value="UniProtKB"/>
</dbReference>
<dbReference type="GO" id="GO:0005634">
    <property type="term" value="C:nucleus"/>
    <property type="evidence" value="ECO:0000250"/>
    <property type="project" value="UniProtKB"/>
</dbReference>
<dbReference type="GO" id="GO:0090734">
    <property type="term" value="C:site of DNA damage"/>
    <property type="evidence" value="ECO:0000250"/>
    <property type="project" value="UniProtKB"/>
</dbReference>
<dbReference type="GO" id="GO:0140463">
    <property type="term" value="F:chromatin-protein adaptor activity"/>
    <property type="evidence" value="ECO:0000250"/>
    <property type="project" value="UniProtKB"/>
</dbReference>
<dbReference type="GO" id="GO:0000993">
    <property type="term" value="F:RNA polymerase II complex binding"/>
    <property type="evidence" value="ECO:0000250"/>
    <property type="project" value="UniProtKB"/>
</dbReference>
<dbReference type="GO" id="GO:0140870">
    <property type="term" value="F:RNA polymerase inhibitor activity"/>
    <property type="evidence" value="ECO:0000250"/>
    <property type="project" value="UniProtKB"/>
</dbReference>
<dbReference type="GO" id="GO:0016567">
    <property type="term" value="P:protein ubiquitination"/>
    <property type="evidence" value="ECO:0000250"/>
    <property type="project" value="UniProtKB"/>
</dbReference>
<dbReference type="GO" id="GO:0009411">
    <property type="term" value="P:response to UV"/>
    <property type="evidence" value="ECO:0000250"/>
    <property type="project" value="UniProtKB"/>
</dbReference>
<dbReference type="GO" id="GO:0006283">
    <property type="term" value="P:transcription-coupled nucleotide-excision repair"/>
    <property type="evidence" value="ECO:0000250"/>
    <property type="project" value="UniProtKB"/>
</dbReference>
<dbReference type="Gene3D" id="1.25.40.90">
    <property type="match status" value="1"/>
</dbReference>
<dbReference type="InterPro" id="IPR008942">
    <property type="entry name" value="ENTH_VHS"/>
</dbReference>
<dbReference type="InterPro" id="IPR018610">
    <property type="entry name" value="UVSSA"/>
</dbReference>
<dbReference type="InterPro" id="IPR049431">
    <property type="entry name" value="UVSSA_C"/>
</dbReference>
<dbReference type="InterPro" id="IPR049408">
    <property type="entry name" value="UVSSA_N_a-solenoid_rpt"/>
</dbReference>
<dbReference type="PANTHER" id="PTHR28670">
    <property type="entry name" value="UV-STIMULATED SCAFFOLD PROTEIN A"/>
    <property type="match status" value="1"/>
</dbReference>
<dbReference type="PANTHER" id="PTHR28670:SF1">
    <property type="entry name" value="UV-STIMULATED SCAFFOLD PROTEIN A"/>
    <property type="match status" value="1"/>
</dbReference>
<dbReference type="Pfam" id="PF09740">
    <property type="entry name" value="DUF2043"/>
    <property type="match status" value="1"/>
</dbReference>
<dbReference type="Pfam" id="PF20867">
    <property type="entry name" value="UVSSA_N"/>
    <property type="match status" value="1"/>
</dbReference>
<dbReference type="PROSITE" id="PS52058">
    <property type="entry name" value="ZF_UVSSA"/>
    <property type="match status" value="1"/>
</dbReference>
<keyword id="KW-0158">Chromosome</keyword>
<keyword id="KW-0175">Coiled coil</keyword>
<keyword id="KW-0227">DNA damage</keyword>
<keyword id="KW-0234">DNA repair</keyword>
<keyword id="KW-1017">Isopeptide bond</keyword>
<keyword id="KW-0479">Metal-binding</keyword>
<keyword id="KW-0597">Phosphoprotein</keyword>
<keyword id="KW-1185">Reference proteome</keyword>
<keyword id="KW-0832">Ubl conjugation</keyword>
<keyword id="KW-0862">Zinc</keyword>
<keyword id="KW-0863">Zinc-finger</keyword>
<evidence type="ECO:0000250" key="1">
    <source>
        <dbReference type="UniProtKB" id="Q2YD98"/>
    </source>
</evidence>
<evidence type="ECO:0000255" key="2"/>
<evidence type="ECO:0000255" key="3">
    <source>
        <dbReference type="PROSITE-ProRule" id="PRU01403"/>
    </source>
</evidence>
<evidence type="ECO:0000256" key="4">
    <source>
        <dbReference type="SAM" id="MobiDB-lite"/>
    </source>
</evidence>
<evidence type="ECO:0000305" key="5"/>
<reference key="1">
    <citation type="journal article" date="2009" name="Genome Biol.">
        <title>A whole-genome assembly of the domestic cow, Bos taurus.</title>
        <authorList>
            <person name="Zimin A.V."/>
            <person name="Delcher A.L."/>
            <person name="Florea L."/>
            <person name="Kelley D.R."/>
            <person name="Schatz M.C."/>
            <person name="Puiu D."/>
            <person name="Hanrahan F."/>
            <person name="Pertea G."/>
            <person name="Van Tassell C.P."/>
            <person name="Sonstegard T.S."/>
            <person name="Marcais G."/>
            <person name="Roberts M."/>
            <person name="Subramanian P."/>
            <person name="Yorke J.A."/>
            <person name="Salzberg S.L."/>
        </authorList>
    </citation>
    <scope>NUCLEOTIDE SEQUENCE [LARGE SCALE GENOMIC DNA]</scope>
    <source>
        <strain>Hereford</strain>
    </source>
</reference>
<name>UVSSA_BOVIN</name>
<protein>
    <recommendedName>
        <fullName>UV-stimulated scaffold protein A</fullName>
    </recommendedName>
</protein>
<gene>
    <name type="primary">UVSSA</name>
</gene>
<organism>
    <name type="scientific">Bos taurus</name>
    <name type="common">Bovine</name>
    <dbReference type="NCBI Taxonomy" id="9913"/>
    <lineage>
        <taxon>Eukaryota</taxon>
        <taxon>Metazoa</taxon>
        <taxon>Chordata</taxon>
        <taxon>Craniata</taxon>
        <taxon>Vertebrata</taxon>
        <taxon>Euteleostomi</taxon>
        <taxon>Mammalia</taxon>
        <taxon>Eutheria</taxon>
        <taxon>Laurasiatheria</taxon>
        <taxon>Artiodactyla</taxon>
        <taxon>Ruminantia</taxon>
        <taxon>Pecora</taxon>
        <taxon>Bovidae</taxon>
        <taxon>Bovinae</taxon>
        <taxon>Bos</taxon>
    </lineage>
</organism>